<accession>A7GGL2</accession>
<evidence type="ECO:0000255" key="1">
    <source>
        <dbReference type="HAMAP-Rule" id="MF_00271"/>
    </source>
</evidence>
<dbReference type="EMBL" id="CP000728">
    <property type="protein sequence ID" value="ABS40956.1"/>
    <property type="molecule type" value="Genomic_DNA"/>
</dbReference>
<dbReference type="RefSeq" id="WP_003401356.1">
    <property type="nucleotide sequence ID" value="NC_009699.1"/>
</dbReference>
<dbReference type="SMR" id="A7GGL2"/>
<dbReference type="KEGG" id="cbf:CLI_2688"/>
<dbReference type="HOGENOM" id="CLU_069688_2_1_9"/>
<dbReference type="Proteomes" id="UP000002410">
    <property type="component" value="Chromosome"/>
</dbReference>
<dbReference type="GO" id="GO:0005524">
    <property type="term" value="F:ATP binding"/>
    <property type="evidence" value="ECO:0007669"/>
    <property type="project" value="UniProtKB-UniRule"/>
</dbReference>
<dbReference type="GO" id="GO:0046933">
    <property type="term" value="F:proton-transporting ATP synthase activity, rotational mechanism"/>
    <property type="evidence" value="ECO:0007669"/>
    <property type="project" value="UniProtKB-UniRule"/>
</dbReference>
<dbReference type="GO" id="GO:0046961">
    <property type="term" value="F:proton-transporting ATPase activity, rotational mechanism"/>
    <property type="evidence" value="ECO:0007669"/>
    <property type="project" value="InterPro"/>
</dbReference>
<dbReference type="GO" id="GO:0042777">
    <property type="term" value="P:proton motive force-driven plasma membrane ATP synthesis"/>
    <property type="evidence" value="ECO:0007669"/>
    <property type="project" value="UniProtKB-UniRule"/>
</dbReference>
<dbReference type="FunFam" id="1.10.287.3240:FF:000007">
    <property type="entry name" value="V-type ATP synthase subunit D"/>
    <property type="match status" value="1"/>
</dbReference>
<dbReference type="Gene3D" id="1.10.287.3240">
    <property type="match status" value="1"/>
</dbReference>
<dbReference type="HAMAP" id="MF_00271">
    <property type="entry name" value="ATP_synth_D_arch"/>
    <property type="match status" value="1"/>
</dbReference>
<dbReference type="InterPro" id="IPR002699">
    <property type="entry name" value="V_ATPase_D"/>
</dbReference>
<dbReference type="NCBIfam" id="NF001543">
    <property type="entry name" value="PRK00373.1-2"/>
    <property type="match status" value="1"/>
</dbReference>
<dbReference type="NCBIfam" id="TIGR00309">
    <property type="entry name" value="V_ATPase_subD"/>
    <property type="match status" value="1"/>
</dbReference>
<dbReference type="PANTHER" id="PTHR11671">
    <property type="entry name" value="V-TYPE ATP SYNTHASE SUBUNIT D"/>
    <property type="match status" value="1"/>
</dbReference>
<dbReference type="Pfam" id="PF01813">
    <property type="entry name" value="ATP-synt_D"/>
    <property type="match status" value="1"/>
</dbReference>
<keyword id="KW-0066">ATP synthesis</keyword>
<keyword id="KW-0375">Hydrogen ion transport</keyword>
<keyword id="KW-0406">Ion transport</keyword>
<keyword id="KW-0813">Transport</keyword>
<name>VATD_CLOBL</name>
<protein>
    <recommendedName>
        <fullName evidence="1">V-type ATP synthase subunit D</fullName>
    </recommendedName>
    <alternativeName>
        <fullName evidence="1">V-ATPase subunit D</fullName>
    </alternativeName>
</protein>
<sequence>MKLNVNPTRMELTKLKKRLTTATRGHKLLKDKQDELMRRFIGMIKKNNELRKDVEKELEGSFKDFLMASAVMSPEFLEEAVAYPKESISVDVKKQNIMSVNVPVFDFKRKLEGDKGSIFPYGFANTSAELDGAIEKLYGILPKLLELAKVEKACQLMADEIEKTRRRVNALEYMTIPQLEETIRFIQMKLDENERSTVTRLMKIKSMMEEKQSNMV</sequence>
<comment type="function">
    <text evidence="1">Produces ATP from ADP in the presence of a proton gradient across the membrane.</text>
</comment>
<comment type="similarity">
    <text evidence="1">Belongs to the V-ATPase D subunit family.</text>
</comment>
<organism>
    <name type="scientific">Clostridium botulinum (strain Langeland / NCTC 10281 / Type F)</name>
    <dbReference type="NCBI Taxonomy" id="441772"/>
    <lineage>
        <taxon>Bacteria</taxon>
        <taxon>Bacillati</taxon>
        <taxon>Bacillota</taxon>
        <taxon>Clostridia</taxon>
        <taxon>Eubacteriales</taxon>
        <taxon>Clostridiaceae</taxon>
        <taxon>Clostridium</taxon>
    </lineage>
</organism>
<reference key="1">
    <citation type="submission" date="2007-06" db="EMBL/GenBank/DDBJ databases">
        <authorList>
            <person name="Brinkac L.M."/>
            <person name="Daugherty S."/>
            <person name="Dodson R.J."/>
            <person name="Madupu R."/>
            <person name="Brown J.L."/>
            <person name="Bruce D."/>
            <person name="Detter C."/>
            <person name="Munk C."/>
            <person name="Smith L.A."/>
            <person name="Smith T.J."/>
            <person name="White O."/>
            <person name="Brettin T.S."/>
        </authorList>
    </citation>
    <scope>NUCLEOTIDE SEQUENCE [LARGE SCALE GENOMIC DNA]</scope>
    <source>
        <strain>Langeland / NCTC 10281 / Type F</strain>
    </source>
</reference>
<proteinExistence type="inferred from homology"/>
<feature type="chain" id="PRO_1000059152" description="V-type ATP synthase subunit D">
    <location>
        <begin position="1"/>
        <end position="216"/>
    </location>
</feature>
<gene>
    <name evidence="1" type="primary">atpD</name>
    <name type="ordered locus">CLI_2688</name>
</gene>